<organism>
    <name type="scientific">Mus musculus</name>
    <name type="common">Mouse</name>
    <dbReference type="NCBI Taxonomy" id="10090"/>
    <lineage>
        <taxon>Eukaryota</taxon>
        <taxon>Metazoa</taxon>
        <taxon>Chordata</taxon>
        <taxon>Craniata</taxon>
        <taxon>Vertebrata</taxon>
        <taxon>Euteleostomi</taxon>
        <taxon>Mammalia</taxon>
        <taxon>Eutheria</taxon>
        <taxon>Euarchontoglires</taxon>
        <taxon>Glires</taxon>
        <taxon>Rodentia</taxon>
        <taxon>Myomorpha</taxon>
        <taxon>Muroidea</taxon>
        <taxon>Muridae</taxon>
        <taxon>Murinae</taxon>
        <taxon>Mus</taxon>
        <taxon>Mus</taxon>
    </lineage>
</organism>
<proteinExistence type="evidence at transcript level"/>
<keyword id="KW-0067">ATP-binding</keyword>
<keyword id="KW-0963">Cytoplasm</keyword>
<keyword id="KW-0418">Kinase</keyword>
<keyword id="KW-0547">Nucleotide-binding</keyword>
<keyword id="KW-0539">Nucleus</keyword>
<keyword id="KW-0597">Phosphoprotein</keyword>
<keyword id="KW-1185">Reference proteome</keyword>
<keyword id="KW-0723">Serine/threonine-protein kinase</keyword>
<keyword id="KW-0808">Transferase</keyword>
<feature type="chain" id="PRO_0000278117" description="Serine/threonine-protein kinase PAK 6">
    <location>
        <begin position="1"/>
        <end position="682"/>
    </location>
</feature>
<feature type="domain" description="CRIB" evidence="2">
    <location>
        <begin position="12"/>
        <end position="25"/>
    </location>
</feature>
<feature type="domain" description="Protein kinase" evidence="3">
    <location>
        <begin position="408"/>
        <end position="659"/>
    </location>
</feature>
<feature type="region of interest" description="Disordered" evidence="4">
    <location>
        <begin position="1"/>
        <end position="30"/>
    </location>
</feature>
<feature type="region of interest" description="Linker" evidence="1">
    <location>
        <begin position="26"/>
        <end position="407"/>
    </location>
</feature>
<feature type="region of interest" description="Disordered" evidence="4">
    <location>
        <begin position="132"/>
        <end position="170"/>
    </location>
</feature>
<feature type="region of interest" description="Disordered" evidence="4">
    <location>
        <begin position="200"/>
        <end position="256"/>
    </location>
</feature>
<feature type="region of interest" description="Disordered" evidence="4">
    <location>
        <begin position="270"/>
        <end position="367"/>
    </location>
</feature>
<feature type="compositionally biased region" description="Polar residues" evidence="4">
    <location>
        <begin position="270"/>
        <end position="279"/>
    </location>
</feature>
<feature type="compositionally biased region" description="Polar residues" evidence="4">
    <location>
        <begin position="297"/>
        <end position="334"/>
    </location>
</feature>
<feature type="active site" description="Proton acceptor" evidence="3">
    <location>
        <position position="527"/>
    </location>
</feature>
<feature type="binding site" evidence="3">
    <location>
        <begin position="414"/>
        <end position="422"/>
    </location>
    <ligand>
        <name>ATP</name>
        <dbReference type="ChEBI" id="CHEBI:30616"/>
    </ligand>
</feature>
<feature type="binding site" evidence="3">
    <location>
        <position position="437"/>
    </location>
    <ligand>
        <name>ATP</name>
        <dbReference type="ChEBI" id="CHEBI:30616"/>
    </ligand>
</feature>
<feature type="modified residue" description="Phosphoserine; by autocatalysis" evidence="1">
    <location>
        <position position="561"/>
    </location>
</feature>
<feature type="sequence conflict" description="In Ref. 1; BAE34737/BAE34725." evidence="5" ref="1">
    <original>C</original>
    <variation>R</variation>
    <location>
        <position position="667"/>
    </location>
</feature>
<comment type="function">
    <text evidence="1">Serine/threonine protein kinase that plays a role in the regulation of gene transcription. The kinase activity is induced by various effectors including AR or MAP2K6/MAPKK6. Phosphorylates the DNA-binding domain of androgen receptor/AR and thereby inhibits AR-mediated transcription. Also inhibits ESR1-mediated transcription. May play a role in cytoskeleton regulation by interacting with IQGAP1. May protect cells from apoptosis through phosphorylation of BAD (By similarity).</text>
</comment>
<comment type="catalytic activity">
    <reaction>
        <text>L-seryl-[protein] + ATP = O-phospho-L-seryl-[protein] + ADP + H(+)</text>
        <dbReference type="Rhea" id="RHEA:17989"/>
        <dbReference type="Rhea" id="RHEA-COMP:9863"/>
        <dbReference type="Rhea" id="RHEA-COMP:11604"/>
        <dbReference type="ChEBI" id="CHEBI:15378"/>
        <dbReference type="ChEBI" id="CHEBI:29999"/>
        <dbReference type="ChEBI" id="CHEBI:30616"/>
        <dbReference type="ChEBI" id="CHEBI:83421"/>
        <dbReference type="ChEBI" id="CHEBI:456216"/>
        <dbReference type="EC" id="2.7.11.1"/>
    </reaction>
</comment>
<comment type="catalytic activity">
    <reaction>
        <text>L-threonyl-[protein] + ATP = O-phospho-L-threonyl-[protein] + ADP + H(+)</text>
        <dbReference type="Rhea" id="RHEA:46608"/>
        <dbReference type="Rhea" id="RHEA-COMP:11060"/>
        <dbReference type="Rhea" id="RHEA-COMP:11605"/>
        <dbReference type="ChEBI" id="CHEBI:15378"/>
        <dbReference type="ChEBI" id="CHEBI:30013"/>
        <dbReference type="ChEBI" id="CHEBI:30616"/>
        <dbReference type="ChEBI" id="CHEBI:61977"/>
        <dbReference type="ChEBI" id="CHEBI:456216"/>
        <dbReference type="EC" id="2.7.11.1"/>
    </reaction>
</comment>
<comment type="subunit">
    <text evidence="1">Interacts tightly with GTP-bound but not GDP-bound CDC42/p21 and RAC1. Interacts with the androgen receptor AR. Interacts with IQGAP1 and PPM1B (By similarity).</text>
</comment>
<comment type="subcellular location">
    <subcellularLocation>
        <location evidence="1">Cytoplasm</location>
    </subcellularLocation>
    <subcellularLocation>
        <location evidence="1">Nucleus</location>
    </subcellularLocation>
    <text evidence="1">Cotranslocates into nucleus with AR in response to androgen induction.</text>
</comment>
<comment type="PTM">
    <text evidence="1">Autophosphorylated. Phosphorylated by MAP2K6/MAPKK6, leading to PAK6 activation (By similarity).</text>
</comment>
<comment type="similarity">
    <text evidence="5">Belongs to the protein kinase superfamily. STE Ser/Thr protein kinase family. STE20 subfamily.</text>
</comment>
<name>PAK6_MOUSE</name>
<reference key="1">
    <citation type="journal article" date="2005" name="Science">
        <title>The transcriptional landscape of the mammalian genome.</title>
        <authorList>
            <person name="Carninci P."/>
            <person name="Kasukawa T."/>
            <person name="Katayama S."/>
            <person name="Gough J."/>
            <person name="Frith M.C."/>
            <person name="Maeda N."/>
            <person name="Oyama R."/>
            <person name="Ravasi T."/>
            <person name="Lenhard B."/>
            <person name="Wells C."/>
            <person name="Kodzius R."/>
            <person name="Shimokawa K."/>
            <person name="Bajic V.B."/>
            <person name="Brenner S.E."/>
            <person name="Batalov S."/>
            <person name="Forrest A.R."/>
            <person name="Zavolan M."/>
            <person name="Davis M.J."/>
            <person name="Wilming L.G."/>
            <person name="Aidinis V."/>
            <person name="Allen J.E."/>
            <person name="Ambesi-Impiombato A."/>
            <person name="Apweiler R."/>
            <person name="Aturaliya R.N."/>
            <person name="Bailey T.L."/>
            <person name="Bansal M."/>
            <person name="Baxter L."/>
            <person name="Beisel K.W."/>
            <person name="Bersano T."/>
            <person name="Bono H."/>
            <person name="Chalk A.M."/>
            <person name="Chiu K.P."/>
            <person name="Choudhary V."/>
            <person name="Christoffels A."/>
            <person name="Clutterbuck D.R."/>
            <person name="Crowe M.L."/>
            <person name="Dalla E."/>
            <person name="Dalrymple B.P."/>
            <person name="de Bono B."/>
            <person name="Della Gatta G."/>
            <person name="di Bernardo D."/>
            <person name="Down T."/>
            <person name="Engstrom P."/>
            <person name="Fagiolini M."/>
            <person name="Faulkner G."/>
            <person name="Fletcher C.F."/>
            <person name="Fukushima T."/>
            <person name="Furuno M."/>
            <person name="Futaki S."/>
            <person name="Gariboldi M."/>
            <person name="Georgii-Hemming P."/>
            <person name="Gingeras T.R."/>
            <person name="Gojobori T."/>
            <person name="Green R.E."/>
            <person name="Gustincich S."/>
            <person name="Harbers M."/>
            <person name="Hayashi Y."/>
            <person name="Hensch T.K."/>
            <person name="Hirokawa N."/>
            <person name="Hill D."/>
            <person name="Huminiecki L."/>
            <person name="Iacono M."/>
            <person name="Ikeo K."/>
            <person name="Iwama A."/>
            <person name="Ishikawa T."/>
            <person name="Jakt M."/>
            <person name="Kanapin A."/>
            <person name="Katoh M."/>
            <person name="Kawasawa Y."/>
            <person name="Kelso J."/>
            <person name="Kitamura H."/>
            <person name="Kitano H."/>
            <person name="Kollias G."/>
            <person name="Krishnan S.P."/>
            <person name="Kruger A."/>
            <person name="Kummerfeld S.K."/>
            <person name="Kurochkin I.V."/>
            <person name="Lareau L.F."/>
            <person name="Lazarevic D."/>
            <person name="Lipovich L."/>
            <person name="Liu J."/>
            <person name="Liuni S."/>
            <person name="McWilliam S."/>
            <person name="Madan Babu M."/>
            <person name="Madera M."/>
            <person name="Marchionni L."/>
            <person name="Matsuda H."/>
            <person name="Matsuzawa S."/>
            <person name="Miki H."/>
            <person name="Mignone F."/>
            <person name="Miyake S."/>
            <person name="Morris K."/>
            <person name="Mottagui-Tabar S."/>
            <person name="Mulder N."/>
            <person name="Nakano N."/>
            <person name="Nakauchi H."/>
            <person name="Ng P."/>
            <person name="Nilsson R."/>
            <person name="Nishiguchi S."/>
            <person name="Nishikawa S."/>
            <person name="Nori F."/>
            <person name="Ohara O."/>
            <person name="Okazaki Y."/>
            <person name="Orlando V."/>
            <person name="Pang K.C."/>
            <person name="Pavan W.J."/>
            <person name="Pavesi G."/>
            <person name="Pesole G."/>
            <person name="Petrovsky N."/>
            <person name="Piazza S."/>
            <person name="Reed J."/>
            <person name="Reid J.F."/>
            <person name="Ring B.Z."/>
            <person name="Ringwald M."/>
            <person name="Rost B."/>
            <person name="Ruan Y."/>
            <person name="Salzberg S.L."/>
            <person name="Sandelin A."/>
            <person name="Schneider C."/>
            <person name="Schoenbach C."/>
            <person name="Sekiguchi K."/>
            <person name="Semple C.A."/>
            <person name="Seno S."/>
            <person name="Sessa L."/>
            <person name="Sheng Y."/>
            <person name="Shibata Y."/>
            <person name="Shimada H."/>
            <person name="Shimada K."/>
            <person name="Silva D."/>
            <person name="Sinclair B."/>
            <person name="Sperling S."/>
            <person name="Stupka E."/>
            <person name="Sugiura K."/>
            <person name="Sultana R."/>
            <person name="Takenaka Y."/>
            <person name="Taki K."/>
            <person name="Tammoja K."/>
            <person name="Tan S.L."/>
            <person name="Tang S."/>
            <person name="Taylor M.S."/>
            <person name="Tegner J."/>
            <person name="Teichmann S.A."/>
            <person name="Ueda H.R."/>
            <person name="van Nimwegen E."/>
            <person name="Verardo R."/>
            <person name="Wei C.L."/>
            <person name="Yagi K."/>
            <person name="Yamanishi H."/>
            <person name="Zabarovsky E."/>
            <person name="Zhu S."/>
            <person name="Zimmer A."/>
            <person name="Hide W."/>
            <person name="Bult C."/>
            <person name="Grimmond S.M."/>
            <person name="Teasdale R.D."/>
            <person name="Liu E.T."/>
            <person name="Brusic V."/>
            <person name="Quackenbush J."/>
            <person name="Wahlestedt C."/>
            <person name="Mattick J.S."/>
            <person name="Hume D.A."/>
            <person name="Kai C."/>
            <person name="Sasaki D."/>
            <person name="Tomaru Y."/>
            <person name="Fukuda S."/>
            <person name="Kanamori-Katayama M."/>
            <person name="Suzuki M."/>
            <person name="Aoki J."/>
            <person name="Arakawa T."/>
            <person name="Iida J."/>
            <person name="Imamura K."/>
            <person name="Itoh M."/>
            <person name="Kato T."/>
            <person name="Kawaji H."/>
            <person name="Kawagashira N."/>
            <person name="Kawashima T."/>
            <person name="Kojima M."/>
            <person name="Kondo S."/>
            <person name="Konno H."/>
            <person name="Nakano K."/>
            <person name="Ninomiya N."/>
            <person name="Nishio T."/>
            <person name="Okada M."/>
            <person name="Plessy C."/>
            <person name="Shibata K."/>
            <person name="Shiraki T."/>
            <person name="Suzuki S."/>
            <person name="Tagami M."/>
            <person name="Waki K."/>
            <person name="Watahiki A."/>
            <person name="Okamura-Oho Y."/>
            <person name="Suzuki H."/>
            <person name="Kawai J."/>
            <person name="Hayashizaki Y."/>
        </authorList>
    </citation>
    <scope>NUCLEOTIDE SEQUENCE [LARGE SCALE MRNA]</scope>
    <source>
        <strain>C57BL/6J</strain>
        <tissue>Visual cortex</tissue>
    </source>
</reference>
<reference key="2">
    <citation type="journal article" date="2009" name="PLoS Biol.">
        <title>Lineage-specific biology revealed by a finished genome assembly of the mouse.</title>
        <authorList>
            <person name="Church D.M."/>
            <person name="Goodstadt L."/>
            <person name="Hillier L.W."/>
            <person name="Zody M.C."/>
            <person name="Goldstein S."/>
            <person name="She X."/>
            <person name="Bult C.J."/>
            <person name="Agarwala R."/>
            <person name="Cherry J.L."/>
            <person name="DiCuccio M."/>
            <person name="Hlavina W."/>
            <person name="Kapustin Y."/>
            <person name="Meric P."/>
            <person name="Maglott D."/>
            <person name="Birtle Z."/>
            <person name="Marques A.C."/>
            <person name="Graves T."/>
            <person name="Zhou S."/>
            <person name="Teague B."/>
            <person name="Potamousis K."/>
            <person name="Churas C."/>
            <person name="Place M."/>
            <person name="Herschleb J."/>
            <person name="Runnheim R."/>
            <person name="Forrest D."/>
            <person name="Amos-Landgraf J."/>
            <person name="Schwartz D.C."/>
            <person name="Cheng Z."/>
            <person name="Lindblad-Toh K."/>
            <person name="Eichler E.E."/>
            <person name="Ponting C.P."/>
        </authorList>
    </citation>
    <scope>NUCLEOTIDE SEQUENCE [LARGE SCALE GENOMIC DNA]</scope>
    <source>
        <strain>C57BL/6J</strain>
    </source>
</reference>
<accession>Q3ULB5</accession>
<accession>Q3TY26</accession>
<gene>
    <name type="primary">Pak6</name>
</gene>
<sequence>MFRKKKKKRPEISAPQNFQHRVHTSFDPKEGKFVGLPPQWQNILDTLRRPKPVVDPSRITRVQLQPMKTVVRGSSVPTEGYISGLLNDIQKLSVISSNTLRGRSPTSRRRAQSLGLLGDDQWAADPDMYLQSPQSEHTDPHGLYLSCNGGTPAGHRQVPWPEPQSPQALPNGMAAKAQSLGPAEFQGASQRCLQQLGACLQSSPPGTSPPMATGRRGVKVAKHSSEEARPQSCLVGSAIGRPGGEGSPSPKNQESSLKHRLFRSMFLSTPATGAASSSKPVPLPQNKPNSAFRPPQKDSSSNLVAKAQSLPSEQPMGTFSPLTTSDTSSPQKSLRTAPAAGPLPGRSSPAGSPRTRHAQISTSNLYLPQDPTVAKGALGGEDTGIVTHEQFKAALRMVVDQGDPRLLLDSYVKIGEGSTGIVCLAREKHSGRQVAVKMMDLRKQQRRELLFNEVVIMRDYQHLNVVEMYKSYLVGEELWVLMEFLQGGALTDIISQVRLNEEQIATVCEAVLQALAYLHAQGVIHRDIKSDSILLTLDGRVKLSDFGFCAQISKDVPKRKSLVGTPYWMAPEVISRSLYATEVDIWSLGIMVIEMVDGEPPYFSDSPVQAMKRLRDSAPPKLKNSYKVSPVLRDFLDRMLVREPQERATAQELLDHPFLLQTGLPECLVPLIQLYRKQTSTC</sequence>
<protein>
    <recommendedName>
        <fullName>Serine/threonine-protein kinase PAK 6</fullName>
        <ecNumber>2.7.11.1</ecNumber>
    </recommendedName>
    <alternativeName>
        <fullName>p21-activated kinase 6</fullName>
        <shortName>PAK-6</shortName>
    </alternativeName>
</protein>
<dbReference type="EC" id="2.7.11.1"/>
<dbReference type="EMBL" id="AK145601">
    <property type="protein sequence ID" value="BAE26534.1"/>
    <property type="molecule type" value="mRNA"/>
</dbReference>
<dbReference type="EMBL" id="AK158913">
    <property type="protein sequence ID" value="BAE34725.1"/>
    <property type="molecule type" value="mRNA"/>
</dbReference>
<dbReference type="EMBL" id="AK158944">
    <property type="protein sequence ID" value="BAE34737.1"/>
    <property type="molecule type" value="mRNA"/>
</dbReference>
<dbReference type="EMBL" id="AL845470">
    <property type="status" value="NOT_ANNOTATED_CDS"/>
    <property type="molecule type" value="Genomic_DNA"/>
</dbReference>
<dbReference type="CCDS" id="CCDS16580.1"/>
<dbReference type="RefSeq" id="NP_001028426.2">
    <property type="nucleotide sequence ID" value="NM_001033254.4"/>
</dbReference>
<dbReference type="RefSeq" id="NP_001139326.1">
    <property type="nucleotide sequence ID" value="NM_001145854.2"/>
</dbReference>
<dbReference type="RefSeq" id="NP_001411690.1">
    <property type="nucleotide sequence ID" value="NM_001424761.1"/>
</dbReference>
<dbReference type="RefSeq" id="NP_001411691.1">
    <property type="nucleotide sequence ID" value="NM_001424762.1"/>
</dbReference>
<dbReference type="RefSeq" id="XP_011237721.1">
    <property type="nucleotide sequence ID" value="XM_011239419.1"/>
</dbReference>
<dbReference type="RefSeq" id="XP_011237722.1">
    <property type="nucleotide sequence ID" value="XM_011239420.2"/>
</dbReference>
<dbReference type="SMR" id="Q3ULB5"/>
<dbReference type="BioGRID" id="229506">
    <property type="interactions" value="3"/>
</dbReference>
<dbReference type="FunCoup" id="Q3ULB5">
    <property type="interactions" value="768"/>
</dbReference>
<dbReference type="STRING" id="10090.ENSMUSP00000097153"/>
<dbReference type="iPTMnet" id="Q3ULB5"/>
<dbReference type="PhosphoSitePlus" id="Q3ULB5"/>
<dbReference type="PaxDb" id="10090-ENSMUSP00000097153"/>
<dbReference type="ProteomicsDB" id="294152"/>
<dbReference type="Antibodypedia" id="10054">
    <property type="antibodies" value="517 antibodies from 39 providers"/>
</dbReference>
<dbReference type="DNASU" id="214230"/>
<dbReference type="Ensembl" id="ENSMUST00000099557.10">
    <property type="protein sequence ID" value="ENSMUSP00000097153.4"/>
    <property type="gene ID" value="ENSMUSG00000074923.11"/>
</dbReference>
<dbReference type="Ensembl" id="ENSMUST00000110853.8">
    <property type="protein sequence ID" value="ENSMUSP00000106477.2"/>
    <property type="gene ID" value="ENSMUSG00000074923.11"/>
</dbReference>
<dbReference type="GeneID" id="214230"/>
<dbReference type="KEGG" id="mmu:214230"/>
<dbReference type="UCSC" id="uc008lsf.2">
    <property type="organism name" value="mouse"/>
</dbReference>
<dbReference type="AGR" id="MGI:2679420"/>
<dbReference type="CTD" id="56924"/>
<dbReference type="MGI" id="MGI:2679420">
    <property type="gene designation" value="Pak6"/>
</dbReference>
<dbReference type="VEuPathDB" id="HostDB:ENSMUSG00000074923"/>
<dbReference type="eggNOG" id="KOG0578">
    <property type="taxonomic scope" value="Eukaryota"/>
</dbReference>
<dbReference type="GeneTree" id="ENSGT00940000156528"/>
<dbReference type="HOGENOM" id="CLU_000288_26_6_1"/>
<dbReference type="InParanoid" id="Q3ULB5"/>
<dbReference type="OMA" id="ARRQTMW"/>
<dbReference type="OrthoDB" id="1022360at2759"/>
<dbReference type="PhylomeDB" id="Q3ULB5"/>
<dbReference type="TreeFam" id="TF105352"/>
<dbReference type="Reactome" id="R-MMU-9013149">
    <property type="pathway name" value="RAC1 GTPase cycle"/>
</dbReference>
<dbReference type="Reactome" id="R-MMU-9013405">
    <property type="pathway name" value="RHOD GTPase cycle"/>
</dbReference>
<dbReference type="Reactome" id="R-MMU-9013407">
    <property type="pathway name" value="RHOH GTPase cycle"/>
</dbReference>
<dbReference type="Reactome" id="R-MMU-9013424">
    <property type="pathway name" value="RHOV GTPase cycle"/>
</dbReference>
<dbReference type="BioGRID-ORCS" id="214230">
    <property type="hits" value="2 hits in 80 CRISPR screens"/>
</dbReference>
<dbReference type="CD-CODE" id="CE726F99">
    <property type="entry name" value="Postsynaptic density"/>
</dbReference>
<dbReference type="PRO" id="PR:Q3ULB5"/>
<dbReference type="Proteomes" id="UP000000589">
    <property type="component" value="Chromosome 2"/>
</dbReference>
<dbReference type="RNAct" id="Q3ULB5">
    <property type="molecule type" value="protein"/>
</dbReference>
<dbReference type="Bgee" id="ENSMUSG00000074923">
    <property type="expression patterns" value="Expressed in embryonic brain and 122 other cell types or tissues"/>
</dbReference>
<dbReference type="GO" id="GO:0005737">
    <property type="term" value="C:cytoplasm"/>
    <property type="evidence" value="ECO:0007669"/>
    <property type="project" value="UniProtKB-SubCell"/>
</dbReference>
<dbReference type="GO" id="GO:0001650">
    <property type="term" value="C:fibrillar center"/>
    <property type="evidence" value="ECO:0007669"/>
    <property type="project" value="Ensembl"/>
</dbReference>
<dbReference type="GO" id="GO:0005654">
    <property type="term" value="C:nucleoplasm"/>
    <property type="evidence" value="ECO:0007669"/>
    <property type="project" value="Ensembl"/>
</dbReference>
<dbReference type="GO" id="GO:0014069">
    <property type="term" value="C:postsynaptic density"/>
    <property type="evidence" value="ECO:0000314"/>
    <property type="project" value="SynGO"/>
</dbReference>
<dbReference type="GO" id="GO:0005524">
    <property type="term" value="F:ATP binding"/>
    <property type="evidence" value="ECO:0007669"/>
    <property type="project" value="UniProtKB-KW"/>
</dbReference>
<dbReference type="GO" id="GO:0106310">
    <property type="term" value="F:protein serine kinase activity"/>
    <property type="evidence" value="ECO:0007669"/>
    <property type="project" value="RHEA"/>
</dbReference>
<dbReference type="GO" id="GO:0004674">
    <property type="term" value="F:protein serine/threonine kinase activity"/>
    <property type="evidence" value="ECO:0007669"/>
    <property type="project" value="UniProtKB-KW"/>
</dbReference>
<dbReference type="GO" id="GO:0007612">
    <property type="term" value="P:learning"/>
    <property type="evidence" value="ECO:0000316"/>
    <property type="project" value="MGI"/>
</dbReference>
<dbReference type="GO" id="GO:0007626">
    <property type="term" value="P:locomotory behavior"/>
    <property type="evidence" value="ECO:0000316"/>
    <property type="project" value="MGI"/>
</dbReference>
<dbReference type="GO" id="GO:0007613">
    <property type="term" value="P:memory"/>
    <property type="evidence" value="ECO:0000316"/>
    <property type="project" value="MGI"/>
</dbReference>
<dbReference type="GO" id="GO:0140058">
    <property type="term" value="P:neuron projection arborization"/>
    <property type="evidence" value="ECO:0000315"/>
    <property type="project" value="MGI"/>
</dbReference>
<dbReference type="GO" id="GO:1990138">
    <property type="term" value="P:neuron projection extension"/>
    <property type="evidence" value="ECO:0000315"/>
    <property type="project" value="MGI"/>
</dbReference>
<dbReference type="CDD" id="cd01093">
    <property type="entry name" value="CRIB_PAK_like"/>
    <property type="match status" value="1"/>
</dbReference>
<dbReference type="CDD" id="cd06659">
    <property type="entry name" value="STKc_PAK6"/>
    <property type="match status" value="1"/>
</dbReference>
<dbReference type="FunFam" id="1.10.510.10:FF:000073">
    <property type="entry name" value="Non-specific serine/threonine protein kinase"/>
    <property type="match status" value="1"/>
</dbReference>
<dbReference type="FunFam" id="3.30.200.20:FF:000141">
    <property type="entry name" value="Non-specific serine/threonine protein kinase"/>
    <property type="match status" value="1"/>
</dbReference>
<dbReference type="FunFam" id="3.90.810.10:FF:000002">
    <property type="entry name" value="Non-specific serine/threonine protein kinase"/>
    <property type="match status" value="1"/>
</dbReference>
<dbReference type="Gene3D" id="3.90.810.10">
    <property type="entry name" value="CRIB domain"/>
    <property type="match status" value="1"/>
</dbReference>
<dbReference type="Gene3D" id="3.30.200.20">
    <property type="entry name" value="Phosphorylase Kinase, domain 1"/>
    <property type="match status" value="1"/>
</dbReference>
<dbReference type="Gene3D" id="1.10.510.10">
    <property type="entry name" value="Transferase(Phosphotransferase) domain 1"/>
    <property type="match status" value="1"/>
</dbReference>
<dbReference type="InterPro" id="IPR000095">
    <property type="entry name" value="CRIB_dom"/>
</dbReference>
<dbReference type="InterPro" id="IPR036936">
    <property type="entry name" value="CRIB_dom_sf"/>
</dbReference>
<dbReference type="InterPro" id="IPR011009">
    <property type="entry name" value="Kinase-like_dom_sf"/>
</dbReference>
<dbReference type="InterPro" id="IPR051931">
    <property type="entry name" value="PAK3-like"/>
</dbReference>
<dbReference type="InterPro" id="IPR033923">
    <property type="entry name" value="PAK_BD"/>
</dbReference>
<dbReference type="InterPro" id="IPR000719">
    <property type="entry name" value="Prot_kinase_dom"/>
</dbReference>
<dbReference type="InterPro" id="IPR017441">
    <property type="entry name" value="Protein_kinase_ATP_BS"/>
</dbReference>
<dbReference type="InterPro" id="IPR035066">
    <property type="entry name" value="STKc_PAK6"/>
</dbReference>
<dbReference type="PANTHER" id="PTHR45832:SF3">
    <property type="entry name" value="NON-SPECIFIC SERINE_THREONINE PROTEIN KINASE"/>
    <property type="match status" value="1"/>
</dbReference>
<dbReference type="PANTHER" id="PTHR45832">
    <property type="entry name" value="SERINE/THREONINE-PROTEIN KINASE SAMKA-RELATED-RELATED"/>
    <property type="match status" value="1"/>
</dbReference>
<dbReference type="Pfam" id="PF00786">
    <property type="entry name" value="PBD"/>
    <property type="match status" value="1"/>
</dbReference>
<dbReference type="Pfam" id="PF00069">
    <property type="entry name" value="Pkinase"/>
    <property type="match status" value="1"/>
</dbReference>
<dbReference type="SMART" id="SM00285">
    <property type="entry name" value="PBD"/>
    <property type="match status" value="1"/>
</dbReference>
<dbReference type="SUPFAM" id="SSF56112">
    <property type="entry name" value="Protein kinase-like (PK-like)"/>
    <property type="match status" value="1"/>
</dbReference>
<dbReference type="PROSITE" id="PS50108">
    <property type="entry name" value="CRIB"/>
    <property type="match status" value="1"/>
</dbReference>
<dbReference type="PROSITE" id="PS00107">
    <property type="entry name" value="PROTEIN_KINASE_ATP"/>
    <property type="match status" value="1"/>
</dbReference>
<dbReference type="PROSITE" id="PS50011">
    <property type="entry name" value="PROTEIN_KINASE_DOM"/>
    <property type="match status" value="1"/>
</dbReference>
<evidence type="ECO:0000250" key="1"/>
<evidence type="ECO:0000255" key="2">
    <source>
        <dbReference type="PROSITE-ProRule" id="PRU00057"/>
    </source>
</evidence>
<evidence type="ECO:0000255" key="3">
    <source>
        <dbReference type="PROSITE-ProRule" id="PRU00159"/>
    </source>
</evidence>
<evidence type="ECO:0000256" key="4">
    <source>
        <dbReference type="SAM" id="MobiDB-lite"/>
    </source>
</evidence>
<evidence type="ECO:0000305" key="5"/>